<organism>
    <name type="scientific">Bacillus cereus (strain B4264)</name>
    <dbReference type="NCBI Taxonomy" id="405532"/>
    <lineage>
        <taxon>Bacteria</taxon>
        <taxon>Bacillati</taxon>
        <taxon>Bacillota</taxon>
        <taxon>Bacilli</taxon>
        <taxon>Bacillales</taxon>
        <taxon>Bacillaceae</taxon>
        <taxon>Bacillus</taxon>
        <taxon>Bacillus cereus group</taxon>
    </lineage>
</organism>
<comment type="function">
    <text evidence="1">Prenyltransferase that catalyzes in vivo the transfer of the heptaprenyl moiety of heptaprenyl pyrophosphate (HepPP; 35 carbon atoms) to the C3 hydroxyl of sn-glycerol-1-phosphate (G1P), producing heptaprenylglyceryl phosphate (HepGP). This reaction is an ether-bond-formation step in the biosynthesis of archaea-type G1P-based membrane lipids found in Bacillales.</text>
</comment>
<comment type="catalytic activity">
    <reaction evidence="1">
        <text>sn-glycerol 1-phosphate + all-trans-heptaprenyl diphosphate = 3-heptaprenyl-sn-glycero-1-phosphate + diphosphate</text>
        <dbReference type="Rhea" id="RHEA:33495"/>
        <dbReference type="ChEBI" id="CHEBI:33019"/>
        <dbReference type="ChEBI" id="CHEBI:57685"/>
        <dbReference type="ChEBI" id="CHEBI:58206"/>
        <dbReference type="ChEBI" id="CHEBI:64781"/>
        <dbReference type="EC" id="2.5.1.n9"/>
    </reaction>
</comment>
<comment type="cofactor">
    <cofactor evidence="1">
        <name>Mg(2+)</name>
        <dbReference type="ChEBI" id="CHEBI:18420"/>
    </cofactor>
</comment>
<comment type="pathway">
    <text evidence="1">Membrane lipid metabolism; glycerophospholipid metabolism.</text>
</comment>
<comment type="subunit">
    <text evidence="1">Homodimer.</text>
</comment>
<comment type="similarity">
    <text evidence="1">Belongs to the GGGP/HepGP synthase family. Group I subfamily.</text>
</comment>
<keyword id="KW-0444">Lipid biosynthesis</keyword>
<keyword id="KW-0443">Lipid metabolism</keyword>
<keyword id="KW-0460">Magnesium</keyword>
<keyword id="KW-0479">Metal-binding</keyword>
<keyword id="KW-0594">Phospholipid biosynthesis</keyword>
<keyword id="KW-1208">Phospholipid metabolism</keyword>
<keyword id="KW-0808">Transferase</keyword>
<evidence type="ECO:0000255" key="1">
    <source>
        <dbReference type="HAMAP-Rule" id="MF_00112"/>
    </source>
</evidence>
<reference key="1">
    <citation type="submission" date="2008-10" db="EMBL/GenBank/DDBJ databases">
        <title>Genome sequence of Bacillus cereus B4264.</title>
        <authorList>
            <person name="Dodson R.J."/>
            <person name="Durkin A.S."/>
            <person name="Rosovitz M.J."/>
            <person name="Rasko D.A."/>
            <person name="Hoffmaster A."/>
            <person name="Ravel J."/>
            <person name="Sutton G."/>
        </authorList>
    </citation>
    <scope>NUCLEOTIDE SEQUENCE [LARGE SCALE GENOMIC DNA]</scope>
    <source>
        <strain>B4264</strain>
    </source>
</reference>
<name>PCRB_BACC4</name>
<sequence>MYDISGWKHVFKLDPNKELSDEHLEMICESGTDAVIVGGSDGVTIDNVLHMLVSIRRYAVPCVLEVSDVEAITPGFDFYYIPSVLNSRKVEWVTGVHHEALKEFGDIMDWDEIFMEGYCVLNPEAKVAQLTEAKCDVTEDDVIAYARLADKLLRLPIFYLEYSGTYGDVELVKNVKAELKQAKLYYGGGISNAEQAKEMAQYADTVVVGNIIYDDIKSALKTVKAVKGE</sequence>
<gene>
    <name evidence="1" type="primary">pcrB</name>
    <name type="ordered locus">BCB4264_A0350</name>
</gene>
<proteinExistence type="inferred from homology"/>
<accession>B7H4U6</accession>
<protein>
    <recommendedName>
        <fullName evidence="1">Heptaprenylglyceryl phosphate synthase</fullName>
        <shortName evidence="1">HepGP synthase</shortName>
        <ecNumber evidence="1">2.5.1.n9</ecNumber>
    </recommendedName>
    <alternativeName>
        <fullName evidence="1">Glycerol-1-phosphate heptaprenyltransferase</fullName>
    </alternativeName>
</protein>
<feature type="chain" id="PRO_1000117517" description="Heptaprenylglyceryl phosphate synthase">
    <location>
        <begin position="1"/>
        <end position="229"/>
    </location>
</feature>
<feature type="binding site" evidence="1">
    <location>
        <position position="12"/>
    </location>
    <ligand>
        <name>sn-glycerol 1-phosphate</name>
        <dbReference type="ChEBI" id="CHEBI:57685"/>
    </ligand>
</feature>
<feature type="binding site" evidence="1">
    <location>
        <position position="14"/>
    </location>
    <ligand>
        <name>Mg(2+)</name>
        <dbReference type="ChEBI" id="CHEBI:18420"/>
    </ligand>
</feature>
<feature type="binding site" evidence="1">
    <location>
        <position position="40"/>
    </location>
    <ligand>
        <name>Mg(2+)</name>
        <dbReference type="ChEBI" id="CHEBI:18420"/>
    </ligand>
</feature>
<feature type="binding site" evidence="1">
    <location>
        <begin position="159"/>
        <end position="164"/>
    </location>
    <ligand>
        <name>sn-glycerol 1-phosphate</name>
        <dbReference type="ChEBI" id="CHEBI:57685"/>
    </ligand>
</feature>
<feature type="binding site" evidence="1">
    <location>
        <position position="189"/>
    </location>
    <ligand>
        <name>sn-glycerol 1-phosphate</name>
        <dbReference type="ChEBI" id="CHEBI:57685"/>
    </ligand>
</feature>
<feature type="binding site" evidence="1">
    <location>
        <begin position="209"/>
        <end position="210"/>
    </location>
    <ligand>
        <name>sn-glycerol 1-phosphate</name>
        <dbReference type="ChEBI" id="CHEBI:57685"/>
    </ligand>
</feature>
<dbReference type="EC" id="2.5.1.n9" evidence="1"/>
<dbReference type="EMBL" id="CP001176">
    <property type="protein sequence ID" value="ACK60244.1"/>
    <property type="molecule type" value="Genomic_DNA"/>
</dbReference>
<dbReference type="RefSeq" id="WP_000272103.1">
    <property type="nucleotide sequence ID" value="NC_011725.1"/>
</dbReference>
<dbReference type="SMR" id="B7H4U6"/>
<dbReference type="KEGG" id="bcb:BCB4264_A0350"/>
<dbReference type="HOGENOM" id="CLU_095211_0_0_9"/>
<dbReference type="UniPathway" id="UPA00940"/>
<dbReference type="Proteomes" id="UP000007096">
    <property type="component" value="Chromosome"/>
</dbReference>
<dbReference type="GO" id="GO:0120536">
    <property type="term" value="F:heptaprenylglyceryl phosphate synthase activity"/>
    <property type="evidence" value="ECO:0007669"/>
    <property type="project" value="RHEA"/>
</dbReference>
<dbReference type="GO" id="GO:0000287">
    <property type="term" value="F:magnesium ion binding"/>
    <property type="evidence" value="ECO:0007669"/>
    <property type="project" value="UniProtKB-UniRule"/>
</dbReference>
<dbReference type="GO" id="GO:0046474">
    <property type="term" value="P:glycerophospholipid biosynthetic process"/>
    <property type="evidence" value="ECO:0007669"/>
    <property type="project" value="UniProtKB-UniRule"/>
</dbReference>
<dbReference type="CDD" id="cd02812">
    <property type="entry name" value="PcrB_like"/>
    <property type="match status" value="1"/>
</dbReference>
<dbReference type="FunFam" id="3.20.20.390:FF:000001">
    <property type="entry name" value="Heptaprenylglyceryl phosphate synthase"/>
    <property type="match status" value="1"/>
</dbReference>
<dbReference type="Gene3D" id="3.20.20.390">
    <property type="entry name" value="FMN-linked oxidoreductases"/>
    <property type="match status" value="1"/>
</dbReference>
<dbReference type="HAMAP" id="MF_00112">
    <property type="entry name" value="GGGP_HepGP_synthase"/>
    <property type="match status" value="1"/>
</dbReference>
<dbReference type="InterPro" id="IPR039074">
    <property type="entry name" value="GGGP/HepGP_synthase_I"/>
</dbReference>
<dbReference type="InterPro" id="IPR038597">
    <property type="entry name" value="GGGP/HepGP_synthase_sf"/>
</dbReference>
<dbReference type="InterPro" id="IPR008205">
    <property type="entry name" value="GGGP_HepGP_synthase"/>
</dbReference>
<dbReference type="NCBIfam" id="TIGR01768">
    <property type="entry name" value="GGGP-family"/>
    <property type="match status" value="1"/>
</dbReference>
<dbReference type="NCBIfam" id="NF003197">
    <property type="entry name" value="PRK04169.1-1"/>
    <property type="match status" value="1"/>
</dbReference>
<dbReference type="NCBIfam" id="NF003199">
    <property type="entry name" value="PRK04169.1-3"/>
    <property type="match status" value="1"/>
</dbReference>
<dbReference type="PANTHER" id="PTHR40029">
    <property type="match status" value="1"/>
</dbReference>
<dbReference type="PANTHER" id="PTHR40029:SF2">
    <property type="entry name" value="HEPTAPRENYLGLYCERYL PHOSPHATE SYNTHASE"/>
    <property type="match status" value="1"/>
</dbReference>
<dbReference type="Pfam" id="PF01884">
    <property type="entry name" value="PcrB"/>
    <property type="match status" value="1"/>
</dbReference>
<dbReference type="SUPFAM" id="SSF51395">
    <property type="entry name" value="FMN-linked oxidoreductases"/>
    <property type="match status" value="1"/>
</dbReference>